<protein>
    <recommendedName>
        <fullName evidence="1">Translation initiation factor IF-3</fullName>
    </recommendedName>
</protein>
<evidence type="ECO:0000255" key="1">
    <source>
        <dbReference type="HAMAP-Rule" id="MF_00080"/>
    </source>
</evidence>
<proteinExistence type="inferred from homology"/>
<gene>
    <name evidence="1" type="primary">infC</name>
    <name type="ordered locus">PMM1636</name>
</gene>
<name>IF3_PROMP</name>
<reference key="1">
    <citation type="journal article" date="2003" name="Nature">
        <title>Genome divergence in two Prochlorococcus ecotypes reflects oceanic niche differentiation.</title>
        <authorList>
            <person name="Rocap G."/>
            <person name="Larimer F.W."/>
            <person name="Lamerdin J.E."/>
            <person name="Malfatti S."/>
            <person name="Chain P."/>
            <person name="Ahlgren N.A."/>
            <person name="Arellano A."/>
            <person name="Coleman M."/>
            <person name="Hauser L."/>
            <person name="Hess W.R."/>
            <person name="Johnson Z.I."/>
            <person name="Land M.L."/>
            <person name="Lindell D."/>
            <person name="Post A.F."/>
            <person name="Regala W."/>
            <person name="Shah M."/>
            <person name="Shaw S.L."/>
            <person name="Steglich C."/>
            <person name="Sullivan M.B."/>
            <person name="Ting C.S."/>
            <person name="Tolonen A."/>
            <person name="Webb E.A."/>
            <person name="Zinser E.R."/>
            <person name="Chisholm S.W."/>
        </authorList>
    </citation>
    <scope>NUCLEOTIDE SEQUENCE [LARGE SCALE GENOMIC DNA]</scope>
    <source>
        <strain>CCMP1986 / NIES-2087 / MED4</strain>
    </source>
</reference>
<accession>Q7TU24</accession>
<keyword id="KW-0963">Cytoplasm</keyword>
<keyword id="KW-0396">Initiation factor</keyword>
<keyword id="KW-0648">Protein biosynthesis</keyword>
<dbReference type="EMBL" id="BX548174">
    <property type="protein sequence ID" value="CAE20095.1"/>
    <property type="molecule type" value="Genomic_DNA"/>
</dbReference>
<dbReference type="RefSeq" id="WP_011133263.1">
    <property type="nucleotide sequence ID" value="NC_005072.1"/>
</dbReference>
<dbReference type="SMR" id="Q7TU24"/>
<dbReference type="STRING" id="59919.PMM1636"/>
<dbReference type="KEGG" id="pmm:PMM1636"/>
<dbReference type="eggNOG" id="COG0290">
    <property type="taxonomic scope" value="Bacteria"/>
</dbReference>
<dbReference type="HOGENOM" id="CLU_054919_3_2_3"/>
<dbReference type="OrthoDB" id="9806014at2"/>
<dbReference type="Proteomes" id="UP000001026">
    <property type="component" value="Chromosome"/>
</dbReference>
<dbReference type="GO" id="GO:0005829">
    <property type="term" value="C:cytosol"/>
    <property type="evidence" value="ECO:0007669"/>
    <property type="project" value="TreeGrafter"/>
</dbReference>
<dbReference type="GO" id="GO:0016020">
    <property type="term" value="C:membrane"/>
    <property type="evidence" value="ECO:0007669"/>
    <property type="project" value="TreeGrafter"/>
</dbReference>
<dbReference type="GO" id="GO:0043022">
    <property type="term" value="F:ribosome binding"/>
    <property type="evidence" value="ECO:0007669"/>
    <property type="project" value="TreeGrafter"/>
</dbReference>
<dbReference type="GO" id="GO:0003743">
    <property type="term" value="F:translation initiation factor activity"/>
    <property type="evidence" value="ECO:0007669"/>
    <property type="project" value="UniProtKB-UniRule"/>
</dbReference>
<dbReference type="GO" id="GO:0032790">
    <property type="term" value="P:ribosome disassembly"/>
    <property type="evidence" value="ECO:0007669"/>
    <property type="project" value="TreeGrafter"/>
</dbReference>
<dbReference type="FunFam" id="3.10.20.80:FF:000001">
    <property type="entry name" value="Translation initiation factor IF-3"/>
    <property type="match status" value="1"/>
</dbReference>
<dbReference type="FunFam" id="3.30.110.10:FF:000001">
    <property type="entry name" value="Translation initiation factor IF-3"/>
    <property type="match status" value="1"/>
</dbReference>
<dbReference type="Gene3D" id="3.30.110.10">
    <property type="entry name" value="Translation initiation factor 3 (IF-3), C-terminal domain"/>
    <property type="match status" value="1"/>
</dbReference>
<dbReference type="Gene3D" id="3.10.20.80">
    <property type="entry name" value="Translation initiation factor 3 (IF-3), N-terminal domain"/>
    <property type="match status" value="1"/>
</dbReference>
<dbReference type="HAMAP" id="MF_00080">
    <property type="entry name" value="IF_3"/>
    <property type="match status" value="1"/>
</dbReference>
<dbReference type="InterPro" id="IPR036788">
    <property type="entry name" value="T_IF-3_C_sf"/>
</dbReference>
<dbReference type="InterPro" id="IPR036787">
    <property type="entry name" value="T_IF-3_N_sf"/>
</dbReference>
<dbReference type="InterPro" id="IPR019813">
    <property type="entry name" value="Translation_initiation_fac3_CS"/>
</dbReference>
<dbReference type="InterPro" id="IPR001288">
    <property type="entry name" value="Translation_initiation_fac_3"/>
</dbReference>
<dbReference type="InterPro" id="IPR019815">
    <property type="entry name" value="Translation_initiation_fac_3_C"/>
</dbReference>
<dbReference type="InterPro" id="IPR019814">
    <property type="entry name" value="Translation_initiation_fac_3_N"/>
</dbReference>
<dbReference type="NCBIfam" id="TIGR00168">
    <property type="entry name" value="infC"/>
    <property type="match status" value="1"/>
</dbReference>
<dbReference type="PANTHER" id="PTHR10938">
    <property type="entry name" value="TRANSLATION INITIATION FACTOR IF-3"/>
    <property type="match status" value="1"/>
</dbReference>
<dbReference type="PANTHER" id="PTHR10938:SF0">
    <property type="entry name" value="TRANSLATION INITIATION FACTOR IF-3, MITOCHONDRIAL"/>
    <property type="match status" value="1"/>
</dbReference>
<dbReference type="Pfam" id="PF00707">
    <property type="entry name" value="IF3_C"/>
    <property type="match status" value="1"/>
</dbReference>
<dbReference type="Pfam" id="PF05198">
    <property type="entry name" value="IF3_N"/>
    <property type="match status" value="1"/>
</dbReference>
<dbReference type="SUPFAM" id="SSF55200">
    <property type="entry name" value="Translation initiation factor IF3, C-terminal domain"/>
    <property type="match status" value="1"/>
</dbReference>
<dbReference type="SUPFAM" id="SSF54364">
    <property type="entry name" value="Translation initiation factor IF3, N-terminal domain"/>
    <property type="match status" value="1"/>
</dbReference>
<dbReference type="PROSITE" id="PS00938">
    <property type="entry name" value="IF3"/>
    <property type="match status" value="1"/>
</dbReference>
<feature type="chain" id="PRO_0000177555" description="Translation initiation factor IF-3">
    <location>
        <begin position="1"/>
        <end position="190"/>
    </location>
</feature>
<sequence>MPPRPRFDRRAPVRELPNINERIKYPQLRVVDSDGKQLGVIDRIKALEIAHQRGLDLVLVSEKANPPVCRIMDYGKYKFEQEKKAKETKKKSHQTEVKEVKMRYKIDKHDYDVRIGQAVRFLKSGDKVKCTVFFRGREIQHSNLAETLLLKMANDLEEQSEVQQRPKREGRNMIMFLSPRKTPLIKKEEG</sequence>
<comment type="function">
    <text evidence="1">IF-3 binds to the 30S ribosomal subunit and shifts the equilibrium between 70S ribosomes and their 50S and 30S subunits in favor of the free subunits, thus enhancing the availability of 30S subunits on which protein synthesis initiation begins.</text>
</comment>
<comment type="subunit">
    <text evidence="1">Monomer.</text>
</comment>
<comment type="subcellular location">
    <subcellularLocation>
        <location evidence="1">Cytoplasm</location>
    </subcellularLocation>
</comment>
<comment type="similarity">
    <text evidence="1">Belongs to the IF-3 family.</text>
</comment>
<organism>
    <name type="scientific">Prochlorococcus marinus subsp. pastoris (strain CCMP1986 / NIES-2087 / MED4)</name>
    <dbReference type="NCBI Taxonomy" id="59919"/>
    <lineage>
        <taxon>Bacteria</taxon>
        <taxon>Bacillati</taxon>
        <taxon>Cyanobacteriota</taxon>
        <taxon>Cyanophyceae</taxon>
        <taxon>Synechococcales</taxon>
        <taxon>Prochlorococcaceae</taxon>
        <taxon>Prochlorococcus</taxon>
    </lineage>
</organism>